<proteinExistence type="evidence at protein level"/>
<reference key="1">
    <citation type="journal article" date="2003" name="Nature">
        <title>The genome sequence of the filamentous fungus Neurospora crassa.</title>
        <authorList>
            <person name="Galagan J.E."/>
            <person name="Calvo S.E."/>
            <person name="Borkovich K.A."/>
            <person name="Selker E.U."/>
            <person name="Read N.D."/>
            <person name="Jaffe D.B."/>
            <person name="FitzHugh W."/>
            <person name="Ma L.-J."/>
            <person name="Smirnov S."/>
            <person name="Purcell S."/>
            <person name="Rehman B."/>
            <person name="Elkins T."/>
            <person name="Engels R."/>
            <person name="Wang S."/>
            <person name="Nielsen C.B."/>
            <person name="Butler J."/>
            <person name="Endrizzi M."/>
            <person name="Qui D."/>
            <person name="Ianakiev P."/>
            <person name="Bell-Pedersen D."/>
            <person name="Nelson M.A."/>
            <person name="Werner-Washburne M."/>
            <person name="Selitrennikoff C.P."/>
            <person name="Kinsey J.A."/>
            <person name="Braun E.L."/>
            <person name="Zelter A."/>
            <person name="Schulte U."/>
            <person name="Kothe G.O."/>
            <person name="Jedd G."/>
            <person name="Mewes H.-W."/>
            <person name="Staben C."/>
            <person name="Marcotte E."/>
            <person name="Greenberg D."/>
            <person name="Roy A."/>
            <person name="Foley K."/>
            <person name="Naylor J."/>
            <person name="Stange-Thomann N."/>
            <person name="Barrett R."/>
            <person name="Gnerre S."/>
            <person name="Kamal M."/>
            <person name="Kamvysselis M."/>
            <person name="Mauceli E.W."/>
            <person name="Bielke C."/>
            <person name="Rudd S."/>
            <person name="Frishman D."/>
            <person name="Krystofova S."/>
            <person name="Rasmussen C."/>
            <person name="Metzenberg R.L."/>
            <person name="Perkins D.D."/>
            <person name="Kroken S."/>
            <person name="Cogoni C."/>
            <person name="Macino G."/>
            <person name="Catcheside D.E.A."/>
            <person name="Li W."/>
            <person name="Pratt R.J."/>
            <person name="Osmani S.A."/>
            <person name="DeSouza C.P.C."/>
            <person name="Glass N.L."/>
            <person name="Orbach M.J."/>
            <person name="Berglund J.A."/>
            <person name="Voelker R."/>
            <person name="Yarden O."/>
            <person name="Plamann M."/>
            <person name="Seiler S."/>
            <person name="Dunlap J.C."/>
            <person name="Radford A."/>
            <person name="Aramayo R."/>
            <person name="Natvig D.O."/>
            <person name="Alex L.A."/>
            <person name="Mannhaupt G."/>
            <person name="Ebbole D.J."/>
            <person name="Freitag M."/>
            <person name="Paulsen I."/>
            <person name="Sachs M.S."/>
            <person name="Lander E.S."/>
            <person name="Nusbaum C."/>
            <person name="Birren B.W."/>
        </authorList>
    </citation>
    <scope>NUCLEOTIDE SEQUENCE [LARGE SCALE GENOMIC DNA]</scope>
    <source>
        <strain>ATCC 24698 / 74-OR23-1A / CBS 708.71 / DSM 1257 / FGSC 987</strain>
    </source>
</reference>
<reference key="2">
    <citation type="journal article" date="2006" name="FEMS Microbiol. Lett.">
        <title>Identification and comparative analysis of the large subunit mitochondrial ribosomal proteins of Neurospora crassa.</title>
        <authorList>
            <person name="Gan X."/>
            <person name="Arita K."/>
            <person name="Isono S."/>
            <person name="Kitakawa M."/>
            <person name="Yoshino K."/>
            <person name="Yonezawa K."/>
            <person name="Kato A."/>
            <person name="Inoue H."/>
            <person name="Isono K."/>
        </authorList>
    </citation>
    <scope>IDENTIFICATION IN THE MITOCHONDRIAL RIBOSOMAL LARGE COMPLEX</scope>
    <scope>IDENTIFICATION BY MASS SPECTROMETRY</scope>
</reference>
<reference evidence="6 7" key="3">
    <citation type="journal article" date="2020" name="Nat. Commun.">
        <title>Analysis of translating mitoribosome reveals functional characteristics of translation in mitochondria of fungi.</title>
        <authorList>
            <person name="Itoh Y."/>
            <person name="Naschberger A."/>
            <person name="Mortezaei N."/>
            <person name="Herrmann J.M."/>
            <person name="Amunts A."/>
        </authorList>
    </citation>
    <scope>STRUCTURE BY ELECTRON MICROSCOPY (2.74 ANGSTROMS)</scope>
</reference>
<comment type="function">
    <text evidence="5">Component of the mitochondrial ribosome (mitoribosome), a dedicated translation machinery responsible for the synthesis of mitochondrial genome-encoded proteins, including at least some of the essential transmembrane subunits of the mitochondrial respiratory chain. The mitoribosomes are attached to the mitochondrial inner membrane and translation products are cotranslationally integrated into the membrane.</text>
</comment>
<comment type="subunit">
    <text evidence="1 2">Component of the mitochondrial large ribosomal subunit (mt-LSU). Mature N.crassa 74S mitochondrial ribosomes consist of a small (37S) and a large (54S) subunit. The 37S small subunit contains a 16S ribosomal RNA (16S mt-rRNA) and 32 different proteins. The 54S large subunit contains a 23S rRNA (23S mt-rRNA) and 42 different proteins.</text>
</comment>
<comment type="subcellular location">
    <subcellularLocation>
        <location evidence="1 2">Mitochondrion</location>
    </subcellularLocation>
</comment>
<comment type="similarity">
    <text evidence="4">Belongs to the universal ribosomal protein uL1 family.</text>
</comment>
<sequence length="303" mass="33279">MASTQQCLASLARLSLSTPTRAALPTIPKFLVPSVAASQVRYATNNPNKGGAKKAPKKKKQYKFFKSWDLTGQQQFSLCDAMRYLRAVEVGQPPLSVKYEVHVKLRTKKNGPVVRDRVRLPTPVKTDTRIAVICPEGSALQEEAKNLGAVMAGEETLFEAIRSGNFPFNKLLCHTESEGALRKANVGKLLGPKGLMPSGKTKTITNNLEATFRDMIGMDEYRERNGVVRMAVGQLGFTPKQLAENIRVFMAKIKSDIGKLDDTTPKMVEEVVLSTTHGPGMSLNAEFAPTDDKIKPEDLESVM</sequence>
<organism>
    <name type="scientific">Neurospora crassa (strain ATCC 24698 / 74-OR23-1A / CBS 708.71 / DSM 1257 / FGSC 987)</name>
    <dbReference type="NCBI Taxonomy" id="367110"/>
    <lineage>
        <taxon>Eukaryota</taxon>
        <taxon>Fungi</taxon>
        <taxon>Dikarya</taxon>
        <taxon>Ascomycota</taxon>
        <taxon>Pezizomycotina</taxon>
        <taxon>Sordariomycetes</taxon>
        <taxon>Sordariomycetidae</taxon>
        <taxon>Sordariales</taxon>
        <taxon>Sordariaceae</taxon>
        <taxon>Neurospora</taxon>
    </lineage>
</organism>
<feature type="chain" id="PRO_0000458602" description="Large ribosomal subunit protein uL1m">
    <location>
        <begin position="1"/>
        <end position="303"/>
    </location>
</feature>
<keyword id="KW-0002">3D-structure</keyword>
<keyword id="KW-0496">Mitochondrion</keyword>
<keyword id="KW-1185">Reference proteome</keyword>
<keyword id="KW-0687">Ribonucleoprotein</keyword>
<keyword id="KW-0689">Ribosomal protein</keyword>
<keyword id="KW-0809">Transit peptide</keyword>
<name>RM01_NEUCR</name>
<protein>
    <recommendedName>
        <fullName evidence="3">Large ribosomal subunit protein uL1m</fullName>
    </recommendedName>
</protein>
<gene>
    <name type="primary">mrpl1</name>
    <name type="ORF">NCU08893</name>
</gene>
<dbReference type="EMBL" id="CM002240">
    <property type="protein sequence ID" value="EAA29595.1"/>
    <property type="molecule type" value="Genomic_DNA"/>
</dbReference>
<dbReference type="RefSeq" id="XP_958831.1">
    <property type="nucleotide sequence ID" value="XM_953738.3"/>
</dbReference>
<dbReference type="PDB" id="6YWS">
    <property type="method" value="EM"/>
    <property type="resolution" value="2.74 A"/>
    <property type="chains" value="e=1-303"/>
</dbReference>
<dbReference type="PDB" id="6YWX">
    <property type="method" value="EM"/>
    <property type="resolution" value="3.10 A"/>
    <property type="chains" value="e=1-303"/>
</dbReference>
<dbReference type="PDBsum" id="6YWS"/>
<dbReference type="PDBsum" id="6YWX"/>
<dbReference type="EMDB" id="EMD-10973"/>
<dbReference type="EMDB" id="EMD-10978"/>
<dbReference type="SMR" id="Q1K699"/>
<dbReference type="FunCoup" id="Q1K699">
    <property type="interactions" value="252"/>
</dbReference>
<dbReference type="STRING" id="367110.Q1K699"/>
<dbReference type="PaxDb" id="5141-EFNCRP00000008815"/>
<dbReference type="EnsemblFungi" id="EAA29595">
    <property type="protein sequence ID" value="EAA29595"/>
    <property type="gene ID" value="NCU08893"/>
</dbReference>
<dbReference type="GeneID" id="3874978"/>
<dbReference type="KEGG" id="ncr:NCU08893"/>
<dbReference type="VEuPathDB" id="FungiDB:NCU08893"/>
<dbReference type="HOGENOM" id="CLU_062853_1_0_1"/>
<dbReference type="InParanoid" id="Q1K699"/>
<dbReference type="OMA" id="EFRVDKH"/>
<dbReference type="OrthoDB" id="1747252at2759"/>
<dbReference type="Proteomes" id="UP000001805">
    <property type="component" value="Chromosome 2, Linkage Group V"/>
</dbReference>
<dbReference type="GO" id="GO:0005762">
    <property type="term" value="C:mitochondrial large ribosomal subunit"/>
    <property type="evidence" value="ECO:0000318"/>
    <property type="project" value="GO_Central"/>
</dbReference>
<dbReference type="GO" id="GO:0003735">
    <property type="term" value="F:structural constituent of ribosome"/>
    <property type="evidence" value="ECO:0000318"/>
    <property type="project" value="GO_Central"/>
</dbReference>
<dbReference type="CDD" id="cd00403">
    <property type="entry name" value="Ribosomal_L1"/>
    <property type="match status" value="1"/>
</dbReference>
<dbReference type="Gene3D" id="3.30.190.20">
    <property type="match status" value="1"/>
</dbReference>
<dbReference type="Gene3D" id="3.40.50.790">
    <property type="match status" value="1"/>
</dbReference>
<dbReference type="InterPro" id="IPR023674">
    <property type="entry name" value="Ribosomal_uL1-like"/>
</dbReference>
<dbReference type="InterPro" id="IPR028364">
    <property type="entry name" value="Ribosomal_uL1/biogenesis"/>
</dbReference>
<dbReference type="InterPro" id="IPR016095">
    <property type="entry name" value="Ribosomal_uL1_3-a/b-sand"/>
</dbReference>
<dbReference type="PANTHER" id="PTHR36427">
    <property type="entry name" value="54S RIBOSOMAL PROTEIN L1, MITOCHONDRIAL"/>
    <property type="match status" value="1"/>
</dbReference>
<dbReference type="PANTHER" id="PTHR36427:SF3">
    <property type="entry name" value="LARGE RIBOSOMAL SUBUNIT PROTEIN UL1M"/>
    <property type="match status" value="1"/>
</dbReference>
<dbReference type="Pfam" id="PF00687">
    <property type="entry name" value="Ribosomal_L1"/>
    <property type="match status" value="1"/>
</dbReference>
<dbReference type="SUPFAM" id="SSF56808">
    <property type="entry name" value="Ribosomal protein L1"/>
    <property type="match status" value="1"/>
</dbReference>
<evidence type="ECO:0000269" key="1">
    <source>
    </source>
</evidence>
<evidence type="ECO:0000269" key="2">
    <source>
    </source>
</evidence>
<evidence type="ECO:0000303" key="3">
    <source>
    </source>
</evidence>
<evidence type="ECO:0000305" key="4"/>
<evidence type="ECO:0000305" key="5">
    <source>
    </source>
</evidence>
<evidence type="ECO:0007744" key="6">
    <source>
        <dbReference type="PDB" id="6YWS"/>
    </source>
</evidence>
<evidence type="ECO:0007744" key="7">
    <source>
        <dbReference type="PDB" id="6YWX"/>
    </source>
</evidence>
<accession>Q1K699</accession>